<gene>
    <name type="primary">ASF1A</name>
    <name type="synonym">SGA2</name>
    <name type="synonym">SP7</name>
    <name type="ordered locus">At1g66740</name>
    <name type="ORF">F4N21.13</name>
</gene>
<dbReference type="EMBL" id="AB078339">
    <property type="protein sequence ID" value="BAC54103.1"/>
    <property type="molecule type" value="mRNA"/>
</dbReference>
<dbReference type="EMBL" id="AC013288">
    <property type="protein sequence ID" value="AAG60078.1"/>
    <property type="molecule type" value="Genomic_DNA"/>
</dbReference>
<dbReference type="EMBL" id="CP002684">
    <property type="protein sequence ID" value="AEE34550.1"/>
    <property type="molecule type" value="Genomic_DNA"/>
</dbReference>
<dbReference type="EMBL" id="AY096540">
    <property type="protein sequence ID" value="AAM20190.1"/>
    <property type="molecule type" value="mRNA"/>
</dbReference>
<dbReference type="EMBL" id="AY065298">
    <property type="protein sequence ID" value="AAL38774.1"/>
    <property type="molecule type" value="mRNA"/>
</dbReference>
<dbReference type="RefSeq" id="NP_176846.1">
    <property type="nucleotide sequence ID" value="NM_105344.4"/>
</dbReference>
<dbReference type="SMR" id="Q9C9M6"/>
<dbReference type="BioGRID" id="28213">
    <property type="interactions" value="1"/>
</dbReference>
<dbReference type="FunCoup" id="Q9C9M6">
    <property type="interactions" value="3328"/>
</dbReference>
<dbReference type="STRING" id="3702.Q9C9M6"/>
<dbReference type="PaxDb" id="3702-AT1G66740.1"/>
<dbReference type="ProteomicsDB" id="246677"/>
<dbReference type="EnsemblPlants" id="AT1G66740.1">
    <property type="protein sequence ID" value="AT1G66740.1"/>
    <property type="gene ID" value="AT1G66740"/>
</dbReference>
<dbReference type="GeneID" id="842992"/>
<dbReference type="Gramene" id="AT1G66740.1">
    <property type="protein sequence ID" value="AT1G66740.1"/>
    <property type="gene ID" value="AT1G66740"/>
</dbReference>
<dbReference type="KEGG" id="ath:AT1G66740"/>
<dbReference type="Araport" id="AT1G66740"/>
<dbReference type="TAIR" id="AT1G66740">
    <property type="gene designation" value="SGA2"/>
</dbReference>
<dbReference type="eggNOG" id="KOG3265">
    <property type="taxonomic scope" value="Eukaryota"/>
</dbReference>
<dbReference type="HOGENOM" id="CLU_060354_1_2_1"/>
<dbReference type="InParanoid" id="Q9C9M6"/>
<dbReference type="OMA" id="FYVNNDY"/>
<dbReference type="OrthoDB" id="29755at2759"/>
<dbReference type="PhylomeDB" id="Q9C9M6"/>
<dbReference type="PRO" id="PR:Q9C9M6"/>
<dbReference type="Proteomes" id="UP000006548">
    <property type="component" value="Chromosome 1"/>
</dbReference>
<dbReference type="ExpressionAtlas" id="Q9C9M6">
    <property type="expression patterns" value="baseline and differential"/>
</dbReference>
<dbReference type="GO" id="GO:0005737">
    <property type="term" value="C:cytoplasm"/>
    <property type="evidence" value="ECO:0000314"/>
    <property type="project" value="TAIR"/>
</dbReference>
<dbReference type="GO" id="GO:0005730">
    <property type="term" value="C:nucleolus"/>
    <property type="evidence" value="ECO:0000314"/>
    <property type="project" value="UniProtKB"/>
</dbReference>
<dbReference type="GO" id="GO:0005634">
    <property type="term" value="C:nucleus"/>
    <property type="evidence" value="ECO:0000314"/>
    <property type="project" value="UniProtKB"/>
</dbReference>
<dbReference type="GO" id="GO:0030875">
    <property type="term" value="C:rDNA protrusion"/>
    <property type="evidence" value="ECO:0000314"/>
    <property type="project" value="UniProtKB"/>
</dbReference>
<dbReference type="GO" id="GO:0051301">
    <property type="term" value="P:cell division"/>
    <property type="evidence" value="ECO:0000315"/>
    <property type="project" value="TAIR"/>
</dbReference>
<dbReference type="GO" id="GO:0006325">
    <property type="term" value="P:chromatin organization"/>
    <property type="evidence" value="ECO:0007669"/>
    <property type="project" value="UniProtKB-KW"/>
</dbReference>
<dbReference type="GO" id="GO:0000724">
    <property type="term" value="P:double-strand break repair via homologous recombination"/>
    <property type="evidence" value="ECO:0000315"/>
    <property type="project" value="TAIR"/>
</dbReference>
<dbReference type="GO" id="GO:0031567">
    <property type="term" value="P:mitotic cell size control checkpoint signaling"/>
    <property type="evidence" value="ECO:0000315"/>
    <property type="project" value="TAIR"/>
</dbReference>
<dbReference type="GO" id="GO:0008361">
    <property type="term" value="P:regulation of cell size"/>
    <property type="evidence" value="ECO:0000315"/>
    <property type="project" value="TAIR"/>
</dbReference>
<dbReference type="GO" id="GO:0010091">
    <property type="term" value="P:trichome branching"/>
    <property type="evidence" value="ECO:0000315"/>
    <property type="project" value="TAIR"/>
</dbReference>
<dbReference type="FunFam" id="2.60.40.1490:FF:000001">
    <property type="entry name" value="Histone chaperone ASF1"/>
    <property type="match status" value="1"/>
</dbReference>
<dbReference type="Gene3D" id="2.60.40.1490">
    <property type="entry name" value="Histone chaperone ASF1-like"/>
    <property type="match status" value="1"/>
</dbReference>
<dbReference type="InterPro" id="IPR006818">
    <property type="entry name" value="ASF1-like"/>
</dbReference>
<dbReference type="InterPro" id="IPR036747">
    <property type="entry name" value="ASF1-like_sf"/>
</dbReference>
<dbReference type="PANTHER" id="PTHR12040">
    <property type="entry name" value="ANTI-SILENCING PROTEIN 1"/>
    <property type="match status" value="1"/>
</dbReference>
<dbReference type="PANTHER" id="PTHR12040:SF26">
    <property type="entry name" value="HISTONE CHAPERONE ASF1A-RELATED"/>
    <property type="match status" value="1"/>
</dbReference>
<dbReference type="Pfam" id="PF04729">
    <property type="entry name" value="ASF1_hist_chap"/>
    <property type="match status" value="1"/>
</dbReference>
<dbReference type="SUPFAM" id="SSF101546">
    <property type="entry name" value="ASF1-like"/>
    <property type="match status" value="1"/>
</dbReference>
<evidence type="ECO:0000250" key="1"/>
<evidence type="ECO:0000256" key="2">
    <source>
        <dbReference type="SAM" id="MobiDB-lite"/>
    </source>
</evidence>
<evidence type="ECO:0000269" key="3">
    <source>
    </source>
</evidence>
<evidence type="ECO:0000269" key="4">
    <source>
    </source>
</evidence>
<evidence type="ECO:0000305" key="5"/>
<proteinExistence type="evidence at protein level"/>
<sequence>MSAIKITNVAVLHNPAPFVSPFQFEISYECLNSLKDDLEWKLIYVGSAEDETYDQLLESVLVGPVNVGNYRFVFQADPPDPSKIQEEDIIGVTVLLLTCSYMGQEFLRVGYYVNNDYEDEQLKEEPPTKVLIDKVQRNILSDKPRVTKFPIDFHPEEEQTAATAAPPEQSDEQQPNVNGEAQVLPDQSVEPKPEES</sequence>
<organism>
    <name type="scientific">Arabidopsis thaliana</name>
    <name type="common">Mouse-ear cress</name>
    <dbReference type="NCBI Taxonomy" id="3702"/>
    <lineage>
        <taxon>Eukaryota</taxon>
        <taxon>Viridiplantae</taxon>
        <taxon>Streptophyta</taxon>
        <taxon>Embryophyta</taxon>
        <taxon>Tracheophyta</taxon>
        <taxon>Spermatophyta</taxon>
        <taxon>Magnoliopsida</taxon>
        <taxon>eudicotyledons</taxon>
        <taxon>Gunneridae</taxon>
        <taxon>Pentapetalae</taxon>
        <taxon>rosids</taxon>
        <taxon>malvids</taxon>
        <taxon>Brassicales</taxon>
        <taxon>Brassicaceae</taxon>
        <taxon>Camelineae</taxon>
        <taxon>Arabidopsis</taxon>
    </lineage>
</organism>
<keyword id="KW-0143">Chaperone</keyword>
<keyword id="KW-0156">Chromatin regulator</keyword>
<keyword id="KW-0539">Nucleus</keyword>
<keyword id="KW-1185">Reference proteome</keyword>
<keyword id="KW-0804">Transcription</keyword>
<keyword id="KW-0805">Transcription regulation</keyword>
<feature type="chain" id="PRO_0000270797" description="Probable histone chaperone ASF1A">
    <location>
        <begin position="1"/>
        <end position="196"/>
    </location>
</feature>
<feature type="region of interest" description="Disordered" evidence="2">
    <location>
        <begin position="146"/>
        <end position="196"/>
    </location>
</feature>
<feature type="compositionally biased region" description="Basic and acidic residues" evidence="2">
    <location>
        <begin position="146"/>
        <end position="157"/>
    </location>
</feature>
<protein>
    <recommendedName>
        <fullName>Probable histone chaperone ASF1A</fullName>
    </recommendedName>
    <alternativeName>
        <fullName>Anti-silencing function protein 1-like protein a</fullName>
        <shortName>Anti-silencing function 1a protein</shortName>
    </alternativeName>
    <alternativeName>
        <fullName>S-locus protein 7</fullName>
        <shortName>AtSP7</shortName>
    </alternativeName>
    <alternativeName>
        <fullName>Silencing group A protein 2</fullName>
    </alternativeName>
</protein>
<reference key="1">
    <citation type="submission" date="2002-01" db="EMBL/GenBank/DDBJ databases">
        <title>Arabidopsis thaliana ASF1 genes.</title>
        <authorList>
            <person name="Kaya H."/>
            <person name="Lee J."/>
            <person name="Araki T."/>
            <person name="Shibahara K."/>
        </authorList>
    </citation>
    <scope>NUCLEOTIDE SEQUENCE [MRNA]</scope>
    <source>
        <strain>cv. Columbia</strain>
    </source>
</reference>
<reference key="2">
    <citation type="journal article" date="2000" name="Nature">
        <title>Sequence and analysis of chromosome 1 of the plant Arabidopsis thaliana.</title>
        <authorList>
            <person name="Theologis A."/>
            <person name="Ecker J.R."/>
            <person name="Palm C.J."/>
            <person name="Federspiel N.A."/>
            <person name="Kaul S."/>
            <person name="White O."/>
            <person name="Alonso J."/>
            <person name="Altafi H."/>
            <person name="Araujo R."/>
            <person name="Bowman C.L."/>
            <person name="Brooks S.Y."/>
            <person name="Buehler E."/>
            <person name="Chan A."/>
            <person name="Chao Q."/>
            <person name="Chen H."/>
            <person name="Cheuk R.F."/>
            <person name="Chin C.W."/>
            <person name="Chung M.K."/>
            <person name="Conn L."/>
            <person name="Conway A.B."/>
            <person name="Conway A.R."/>
            <person name="Creasy T.H."/>
            <person name="Dewar K."/>
            <person name="Dunn P."/>
            <person name="Etgu P."/>
            <person name="Feldblyum T.V."/>
            <person name="Feng J.-D."/>
            <person name="Fong B."/>
            <person name="Fujii C.Y."/>
            <person name="Gill J.E."/>
            <person name="Goldsmith A.D."/>
            <person name="Haas B."/>
            <person name="Hansen N.F."/>
            <person name="Hughes B."/>
            <person name="Huizar L."/>
            <person name="Hunter J.L."/>
            <person name="Jenkins J."/>
            <person name="Johnson-Hopson C."/>
            <person name="Khan S."/>
            <person name="Khaykin E."/>
            <person name="Kim C.J."/>
            <person name="Koo H.L."/>
            <person name="Kremenetskaia I."/>
            <person name="Kurtz D.B."/>
            <person name="Kwan A."/>
            <person name="Lam B."/>
            <person name="Langin-Hooper S."/>
            <person name="Lee A."/>
            <person name="Lee J.M."/>
            <person name="Lenz C.A."/>
            <person name="Li J.H."/>
            <person name="Li Y.-P."/>
            <person name="Lin X."/>
            <person name="Liu S.X."/>
            <person name="Liu Z.A."/>
            <person name="Luros J.S."/>
            <person name="Maiti R."/>
            <person name="Marziali A."/>
            <person name="Militscher J."/>
            <person name="Miranda M."/>
            <person name="Nguyen M."/>
            <person name="Nierman W.C."/>
            <person name="Osborne B.I."/>
            <person name="Pai G."/>
            <person name="Peterson J."/>
            <person name="Pham P.K."/>
            <person name="Rizzo M."/>
            <person name="Rooney T."/>
            <person name="Rowley D."/>
            <person name="Sakano H."/>
            <person name="Salzberg S.L."/>
            <person name="Schwartz J.R."/>
            <person name="Shinn P."/>
            <person name="Southwick A.M."/>
            <person name="Sun H."/>
            <person name="Tallon L.J."/>
            <person name="Tambunga G."/>
            <person name="Toriumi M.J."/>
            <person name="Town C.D."/>
            <person name="Utterback T."/>
            <person name="Van Aken S."/>
            <person name="Vaysberg M."/>
            <person name="Vysotskaia V.S."/>
            <person name="Walker M."/>
            <person name="Wu D."/>
            <person name="Yu G."/>
            <person name="Fraser C.M."/>
            <person name="Venter J.C."/>
            <person name="Davis R.W."/>
        </authorList>
    </citation>
    <scope>NUCLEOTIDE SEQUENCE [LARGE SCALE GENOMIC DNA]</scope>
    <source>
        <strain>cv. Columbia</strain>
    </source>
</reference>
<reference key="3">
    <citation type="journal article" date="2017" name="Plant J.">
        <title>Araport11: a complete reannotation of the Arabidopsis thaliana reference genome.</title>
        <authorList>
            <person name="Cheng C.Y."/>
            <person name="Krishnakumar V."/>
            <person name="Chan A.P."/>
            <person name="Thibaud-Nissen F."/>
            <person name="Schobel S."/>
            <person name="Town C.D."/>
        </authorList>
    </citation>
    <scope>GENOME REANNOTATION</scope>
    <source>
        <strain>cv. Columbia</strain>
    </source>
</reference>
<reference key="4">
    <citation type="journal article" date="2003" name="Science">
        <title>Empirical analysis of transcriptional activity in the Arabidopsis genome.</title>
        <authorList>
            <person name="Yamada K."/>
            <person name="Lim J."/>
            <person name="Dale J.M."/>
            <person name="Chen H."/>
            <person name="Shinn P."/>
            <person name="Palm C.J."/>
            <person name="Southwick A.M."/>
            <person name="Wu H.C."/>
            <person name="Kim C.J."/>
            <person name="Nguyen M."/>
            <person name="Pham P.K."/>
            <person name="Cheuk R.F."/>
            <person name="Karlin-Newmann G."/>
            <person name="Liu S.X."/>
            <person name="Lam B."/>
            <person name="Sakano H."/>
            <person name="Wu T."/>
            <person name="Yu G."/>
            <person name="Miranda M."/>
            <person name="Quach H.L."/>
            <person name="Tripp M."/>
            <person name="Chang C.H."/>
            <person name="Lee J.M."/>
            <person name="Toriumi M.J."/>
            <person name="Chan M.M."/>
            <person name="Tang C.C."/>
            <person name="Onodera C.S."/>
            <person name="Deng J.M."/>
            <person name="Akiyama K."/>
            <person name="Ansari Y."/>
            <person name="Arakawa T."/>
            <person name="Banh J."/>
            <person name="Banno F."/>
            <person name="Bowser L."/>
            <person name="Brooks S.Y."/>
            <person name="Carninci P."/>
            <person name="Chao Q."/>
            <person name="Choy N."/>
            <person name="Enju A."/>
            <person name="Goldsmith A.D."/>
            <person name="Gurjal M."/>
            <person name="Hansen N.F."/>
            <person name="Hayashizaki Y."/>
            <person name="Johnson-Hopson C."/>
            <person name="Hsuan V.W."/>
            <person name="Iida K."/>
            <person name="Karnes M."/>
            <person name="Khan S."/>
            <person name="Koesema E."/>
            <person name="Ishida J."/>
            <person name="Jiang P.X."/>
            <person name="Jones T."/>
            <person name="Kawai J."/>
            <person name="Kamiya A."/>
            <person name="Meyers C."/>
            <person name="Nakajima M."/>
            <person name="Narusaka M."/>
            <person name="Seki M."/>
            <person name="Sakurai T."/>
            <person name="Satou M."/>
            <person name="Tamse R."/>
            <person name="Vaysberg M."/>
            <person name="Wallender E.K."/>
            <person name="Wong C."/>
            <person name="Yamamura Y."/>
            <person name="Yuan S."/>
            <person name="Shinozaki K."/>
            <person name="Davis R.W."/>
            <person name="Theologis A."/>
            <person name="Ecker J.R."/>
        </authorList>
    </citation>
    <scope>NUCLEOTIDE SEQUENCE [LARGE SCALE MRNA]</scope>
    <source>
        <strain>cv. Columbia</strain>
    </source>
</reference>
<reference key="5">
    <citation type="journal article" date="2001" name="DNA Res.">
        <title>Characterization of expressed genes in the SLL2 region of self-compatible Arabidopsis thaliana.</title>
        <authorList>
            <person name="Takada Y."/>
            <person name="Ito A."/>
            <person name="Ninomiya C."/>
            <person name="Kakizaki T."/>
            <person name="Takahata Y."/>
            <person name="Suzuki G."/>
            <person name="Hatakeyama K."/>
            <person name="Hinata K."/>
            <person name="Shiba H."/>
            <person name="Takayama S."/>
            <person name="Isogai A."/>
            <person name="Watanabe M."/>
        </authorList>
    </citation>
    <scope>TISSUE SPECIFICITY</scope>
</reference>
<reference key="6">
    <citation type="journal article" date="2014" name="Biol. Open">
        <title>The HIRA complex that deposits the histone H3.3 is conserved in Arabidopsis and facilitates transcriptional dynamics.</title>
        <authorList>
            <person name="Nie X."/>
            <person name="Wang H."/>
            <person name="Li J."/>
            <person name="Holec S."/>
            <person name="Berger F."/>
        </authorList>
    </citation>
    <scope>SUBCELLULAR LOCATION</scope>
    <scope>INTERACTION WITH HIRA</scope>
    <source>
        <strain>cv. Columbia</strain>
    </source>
</reference>
<accession>Q9C9M6</accession>
<comment type="function">
    <text evidence="1">Histone chaperone that facilitates histone deposition and histone exchange and removal during nucleosome assembly and disassembly (By similarity). While encoded by a region of the Arabidopsis thaliana genome that is homologous to the Brassica S-locus for self incompatibility, this protein may not play the same role in Arabidopsis thaliana.</text>
</comment>
<comment type="subunit">
    <text evidence="1 4">Interacts with histone H3 and histone H4 (By similarity). Component of the HIRA complex made of UBN1, UBN2, ASF1A, CABIN1 and HIRA. Interacts with HIRA (PubMed:25086063).</text>
</comment>
<comment type="subcellular location">
    <subcellularLocation>
        <location evidence="4">Nucleus</location>
    </subcellularLocation>
    <subcellularLocation>
        <location evidence="4">Nucleus</location>
        <location evidence="4">Nucleolus</location>
    </subcellularLocation>
    <text evidence="4">Localized at rDNA loci in the nucleolus.</text>
</comment>
<comment type="tissue specificity">
    <text evidence="3">Expressed in leaves and flower buds.</text>
</comment>
<comment type="similarity">
    <text evidence="5">Belongs to the ASF1 family.</text>
</comment>
<name>ASF1A_ARATH</name>